<proteinExistence type="inferred from homology"/>
<dbReference type="EMBL" id="AF041468">
    <property type="protein sequence ID" value="AAC35608.1"/>
    <property type="molecule type" value="Genomic_DNA"/>
</dbReference>
<dbReference type="RefSeq" id="NP_050674.1">
    <property type="nucleotide sequence ID" value="NC_000926.1"/>
</dbReference>
<dbReference type="SMR" id="O78423"/>
<dbReference type="GeneID" id="856960"/>
<dbReference type="HOGENOM" id="CLU_100590_5_2_1"/>
<dbReference type="OMA" id="KQPIYRI"/>
<dbReference type="GO" id="GO:0009507">
    <property type="term" value="C:chloroplast"/>
    <property type="evidence" value="ECO:0007669"/>
    <property type="project" value="UniProtKB-SubCell"/>
</dbReference>
<dbReference type="GO" id="GO:0005739">
    <property type="term" value="C:mitochondrion"/>
    <property type="evidence" value="ECO:0007669"/>
    <property type="project" value="GOC"/>
</dbReference>
<dbReference type="GO" id="GO:0015935">
    <property type="term" value="C:small ribosomal subunit"/>
    <property type="evidence" value="ECO:0007669"/>
    <property type="project" value="TreeGrafter"/>
</dbReference>
<dbReference type="GO" id="GO:0003735">
    <property type="term" value="F:structural constituent of ribosome"/>
    <property type="evidence" value="ECO:0007669"/>
    <property type="project" value="InterPro"/>
</dbReference>
<dbReference type="GO" id="GO:0032543">
    <property type="term" value="P:mitochondrial translation"/>
    <property type="evidence" value="ECO:0007669"/>
    <property type="project" value="TreeGrafter"/>
</dbReference>
<dbReference type="Gene3D" id="3.30.1320.10">
    <property type="match status" value="1"/>
</dbReference>
<dbReference type="HAMAP" id="MF_00385">
    <property type="entry name" value="Ribosomal_bS16"/>
    <property type="match status" value="1"/>
</dbReference>
<dbReference type="InterPro" id="IPR000307">
    <property type="entry name" value="Ribosomal_bS16"/>
</dbReference>
<dbReference type="InterPro" id="IPR023803">
    <property type="entry name" value="Ribosomal_bS16_dom_sf"/>
</dbReference>
<dbReference type="NCBIfam" id="TIGR00002">
    <property type="entry name" value="S16"/>
    <property type="match status" value="1"/>
</dbReference>
<dbReference type="PANTHER" id="PTHR12919">
    <property type="entry name" value="30S RIBOSOMAL PROTEIN S16"/>
    <property type="match status" value="1"/>
</dbReference>
<dbReference type="PANTHER" id="PTHR12919:SF20">
    <property type="entry name" value="SMALL RIBOSOMAL SUBUNIT PROTEIN BS16M"/>
    <property type="match status" value="1"/>
</dbReference>
<dbReference type="Pfam" id="PF00886">
    <property type="entry name" value="Ribosomal_S16"/>
    <property type="match status" value="1"/>
</dbReference>
<dbReference type="SUPFAM" id="SSF54565">
    <property type="entry name" value="Ribosomal protein S16"/>
    <property type="match status" value="1"/>
</dbReference>
<geneLocation type="chloroplast"/>
<feature type="chain" id="PRO_0000167302" description="Small ribosomal subunit protein bS16c">
    <location>
        <begin position="1"/>
        <end position="76"/>
    </location>
</feature>
<name>RR16_GUITH</name>
<reference key="1">
    <citation type="journal article" date="1999" name="J. Mol. Evol.">
        <title>The plastid genome of the cryptophyte alga, Guillardia theta: complete sequence and conserved synteny groups confirm its common ancestry with red algae.</title>
        <authorList>
            <person name="Douglas S.E."/>
            <person name="Penny S.L."/>
        </authorList>
    </citation>
    <scope>NUCLEOTIDE SEQUENCE [LARGE SCALE GENOMIC DNA]</scope>
</reference>
<keyword id="KW-0150">Chloroplast</keyword>
<keyword id="KW-0934">Plastid</keyword>
<keyword id="KW-0687">Ribonucleoprotein</keyword>
<keyword id="KW-0689">Ribosomal protein</keyword>
<comment type="subcellular location">
    <subcellularLocation>
        <location>Plastid</location>
        <location>Chloroplast</location>
    </subcellularLocation>
</comment>
<comment type="similarity">
    <text evidence="1">Belongs to the bacterial ribosomal protein bS16 family.</text>
</comment>
<protein>
    <recommendedName>
        <fullName evidence="1">Small ribosomal subunit protein bS16c</fullName>
    </recommendedName>
    <alternativeName>
        <fullName evidence="2">30S ribosomal protein S16, chloroplastic</fullName>
    </alternativeName>
</protein>
<organism>
    <name type="scientific">Guillardia theta</name>
    <name type="common">Cryptophyte</name>
    <name type="synonym">Cryptomonas phi</name>
    <dbReference type="NCBI Taxonomy" id="55529"/>
    <lineage>
        <taxon>Eukaryota</taxon>
        <taxon>Cryptophyceae</taxon>
        <taxon>Pyrenomonadales</taxon>
        <taxon>Geminigeraceae</taxon>
        <taxon>Guillardia</taxon>
    </lineage>
</organism>
<sequence>MLKLRLKKYGRKGQASYRLVVMPSTSKRDGRAIEELGFYNPCTNETHINVERVKVRLSQGVKPTSTVKNLLDKVIF</sequence>
<evidence type="ECO:0000255" key="1">
    <source>
        <dbReference type="HAMAP-Rule" id="MF_00385"/>
    </source>
</evidence>
<evidence type="ECO:0000305" key="2"/>
<accession>O78423</accession>
<gene>
    <name evidence="1" type="primary">rps16</name>
</gene>